<comment type="function">
    <text evidence="1">Catalyzes the ATP-dependent transfer of a sulfur to tRNA to produce 4-thiouridine in position 8 of tRNAs, which functions as a near-UV photosensor. Also catalyzes the transfer of sulfur to the sulfur carrier protein ThiS, forming ThiS-thiocarboxylate. This is a step in the synthesis of thiazole, in the thiamine biosynthesis pathway. The sulfur is donated as persulfide by IscS.</text>
</comment>
<comment type="catalytic activity">
    <reaction evidence="1">
        <text>[ThiI sulfur-carrier protein]-S-sulfanyl-L-cysteine + a uridine in tRNA + 2 reduced [2Fe-2S]-[ferredoxin] + ATP + H(+) = [ThiI sulfur-carrier protein]-L-cysteine + a 4-thiouridine in tRNA + 2 oxidized [2Fe-2S]-[ferredoxin] + AMP + diphosphate</text>
        <dbReference type="Rhea" id="RHEA:24176"/>
        <dbReference type="Rhea" id="RHEA-COMP:10000"/>
        <dbReference type="Rhea" id="RHEA-COMP:10001"/>
        <dbReference type="Rhea" id="RHEA-COMP:13337"/>
        <dbReference type="Rhea" id="RHEA-COMP:13338"/>
        <dbReference type="Rhea" id="RHEA-COMP:13339"/>
        <dbReference type="Rhea" id="RHEA-COMP:13340"/>
        <dbReference type="ChEBI" id="CHEBI:15378"/>
        <dbReference type="ChEBI" id="CHEBI:29950"/>
        <dbReference type="ChEBI" id="CHEBI:30616"/>
        <dbReference type="ChEBI" id="CHEBI:33019"/>
        <dbReference type="ChEBI" id="CHEBI:33737"/>
        <dbReference type="ChEBI" id="CHEBI:33738"/>
        <dbReference type="ChEBI" id="CHEBI:61963"/>
        <dbReference type="ChEBI" id="CHEBI:65315"/>
        <dbReference type="ChEBI" id="CHEBI:136798"/>
        <dbReference type="ChEBI" id="CHEBI:456215"/>
        <dbReference type="EC" id="2.8.1.4"/>
    </reaction>
</comment>
<comment type="catalytic activity">
    <reaction evidence="1">
        <text>[ThiS sulfur-carrier protein]-C-terminal Gly-Gly-AMP + S-sulfanyl-L-cysteinyl-[cysteine desulfurase] + AH2 = [ThiS sulfur-carrier protein]-C-terminal-Gly-aminoethanethioate + L-cysteinyl-[cysteine desulfurase] + A + AMP + 2 H(+)</text>
        <dbReference type="Rhea" id="RHEA:43340"/>
        <dbReference type="Rhea" id="RHEA-COMP:12157"/>
        <dbReference type="Rhea" id="RHEA-COMP:12158"/>
        <dbReference type="Rhea" id="RHEA-COMP:12910"/>
        <dbReference type="Rhea" id="RHEA-COMP:19908"/>
        <dbReference type="ChEBI" id="CHEBI:13193"/>
        <dbReference type="ChEBI" id="CHEBI:15378"/>
        <dbReference type="ChEBI" id="CHEBI:17499"/>
        <dbReference type="ChEBI" id="CHEBI:29950"/>
        <dbReference type="ChEBI" id="CHEBI:61963"/>
        <dbReference type="ChEBI" id="CHEBI:90618"/>
        <dbReference type="ChEBI" id="CHEBI:232372"/>
        <dbReference type="ChEBI" id="CHEBI:456215"/>
    </reaction>
</comment>
<comment type="pathway">
    <text evidence="1">Cofactor biosynthesis; thiamine diphosphate biosynthesis.</text>
</comment>
<comment type="subcellular location">
    <subcellularLocation>
        <location evidence="1">Cytoplasm</location>
    </subcellularLocation>
</comment>
<comment type="similarity">
    <text evidence="1">Belongs to the ThiI family.</text>
</comment>
<name>THII_STRPZ</name>
<keyword id="KW-0067">ATP-binding</keyword>
<keyword id="KW-0963">Cytoplasm</keyword>
<keyword id="KW-0547">Nucleotide-binding</keyword>
<keyword id="KW-0694">RNA-binding</keyword>
<keyword id="KW-0784">Thiamine biosynthesis</keyword>
<keyword id="KW-0808">Transferase</keyword>
<keyword id="KW-0820">tRNA-binding</keyword>
<dbReference type="EC" id="2.8.1.4" evidence="1"/>
<dbReference type="EMBL" id="CP000829">
    <property type="protein sequence ID" value="ACI60962.1"/>
    <property type="molecule type" value="Genomic_DNA"/>
</dbReference>
<dbReference type="SMR" id="B5XKV0"/>
<dbReference type="KEGG" id="soz:Spy49_0641"/>
<dbReference type="HOGENOM" id="CLU_037952_4_0_9"/>
<dbReference type="UniPathway" id="UPA00060"/>
<dbReference type="Proteomes" id="UP000001039">
    <property type="component" value="Chromosome"/>
</dbReference>
<dbReference type="GO" id="GO:0005829">
    <property type="term" value="C:cytosol"/>
    <property type="evidence" value="ECO:0007669"/>
    <property type="project" value="TreeGrafter"/>
</dbReference>
<dbReference type="GO" id="GO:0005524">
    <property type="term" value="F:ATP binding"/>
    <property type="evidence" value="ECO:0007669"/>
    <property type="project" value="UniProtKB-UniRule"/>
</dbReference>
<dbReference type="GO" id="GO:0004810">
    <property type="term" value="F:CCA tRNA nucleotidyltransferase activity"/>
    <property type="evidence" value="ECO:0007669"/>
    <property type="project" value="InterPro"/>
</dbReference>
<dbReference type="GO" id="GO:0000049">
    <property type="term" value="F:tRNA binding"/>
    <property type="evidence" value="ECO:0007669"/>
    <property type="project" value="UniProtKB-UniRule"/>
</dbReference>
<dbReference type="GO" id="GO:0140741">
    <property type="term" value="F:tRNA-uracil-4 sulfurtransferase activity"/>
    <property type="evidence" value="ECO:0007669"/>
    <property type="project" value="UniProtKB-EC"/>
</dbReference>
<dbReference type="GO" id="GO:0009228">
    <property type="term" value="P:thiamine biosynthetic process"/>
    <property type="evidence" value="ECO:0007669"/>
    <property type="project" value="UniProtKB-KW"/>
</dbReference>
<dbReference type="GO" id="GO:0009229">
    <property type="term" value="P:thiamine diphosphate biosynthetic process"/>
    <property type="evidence" value="ECO:0007669"/>
    <property type="project" value="UniProtKB-UniRule"/>
</dbReference>
<dbReference type="GO" id="GO:0052837">
    <property type="term" value="P:thiazole biosynthetic process"/>
    <property type="evidence" value="ECO:0007669"/>
    <property type="project" value="TreeGrafter"/>
</dbReference>
<dbReference type="GO" id="GO:0002937">
    <property type="term" value="P:tRNA 4-thiouridine biosynthesis"/>
    <property type="evidence" value="ECO:0007669"/>
    <property type="project" value="TreeGrafter"/>
</dbReference>
<dbReference type="CDD" id="cd01712">
    <property type="entry name" value="PPase_ThiI"/>
    <property type="match status" value="1"/>
</dbReference>
<dbReference type="CDD" id="cd11716">
    <property type="entry name" value="THUMP_ThiI"/>
    <property type="match status" value="1"/>
</dbReference>
<dbReference type="FunFam" id="3.40.50.620:FF:000053">
    <property type="entry name" value="Probable tRNA sulfurtransferase"/>
    <property type="match status" value="1"/>
</dbReference>
<dbReference type="Gene3D" id="3.30.2130.30">
    <property type="match status" value="1"/>
</dbReference>
<dbReference type="Gene3D" id="3.40.50.620">
    <property type="entry name" value="HUPs"/>
    <property type="match status" value="1"/>
</dbReference>
<dbReference type="HAMAP" id="MF_00021">
    <property type="entry name" value="ThiI"/>
    <property type="match status" value="1"/>
</dbReference>
<dbReference type="InterPro" id="IPR014729">
    <property type="entry name" value="Rossmann-like_a/b/a_fold"/>
</dbReference>
<dbReference type="InterPro" id="IPR020536">
    <property type="entry name" value="ThiI_AANH"/>
</dbReference>
<dbReference type="InterPro" id="IPR054173">
    <property type="entry name" value="ThiI_fer"/>
</dbReference>
<dbReference type="InterPro" id="IPR049961">
    <property type="entry name" value="ThiI_N"/>
</dbReference>
<dbReference type="InterPro" id="IPR004114">
    <property type="entry name" value="THUMP_dom"/>
</dbReference>
<dbReference type="InterPro" id="IPR049962">
    <property type="entry name" value="THUMP_ThiI"/>
</dbReference>
<dbReference type="InterPro" id="IPR003720">
    <property type="entry name" value="tRNA_STrfase"/>
</dbReference>
<dbReference type="InterPro" id="IPR050102">
    <property type="entry name" value="tRNA_sulfurtransferase_ThiI"/>
</dbReference>
<dbReference type="NCBIfam" id="TIGR00342">
    <property type="entry name" value="tRNA uracil 4-sulfurtransferase ThiI"/>
    <property type="match status" value="1"/>
</dbReference>
<dbReference type="PANTHER" id="PTHR43209">
    <property type="entry name" value="TRNA SULFURTRANSFERASE"/>
    <property type="match status" value="1"/>
</dbReference>
<dbReference type="PANTHER" id="PTHR43209:SF1">
    <property type="entry name" value="TRNA SULFURTRANSFERASE"/>
    <property type="match status" value="1"/>
</dbReference>
<dbReference type="Pfam" id="PF02568">
    <property type="entry name" value="ThiI"/>
    <property type="match status" value="1"/>
</dbReference>
<dbReference type="Pfam" id="PF22025">
    <property type="entry name" value="ThiI_fer"/>
    <property type="match status" value="1"/>
</dbReference>
<dbReference type="Pfam" id="PF02926">
    <property type="entry name" value="THUMP"/>
    <property type="match status" value="1"/>
</dbReference>
<dbReference type="SMART" id="SM00981">
    <property type="entry name" value="THUMP"/>
    <property type="match status" value="1"/>
</dbReference>
<dbReference type="SUPFAM" id="SSF52402">
    <property type="entry name" value="Adenine nucleotide alpha hydrolases-like"/>
    <property type="match status" value="1"/>
</dbReference>
<dbReference type="SUPFAM" id="SSF143437">
    <property type="entry name" value="THUMP domain-like"/>
    <property type="match status" value="1"/>
</dbReference>
<dbReference type="PROSITE" id="PS51165">
    <property type="entry name" value="THUMP"/>
    <property type="match status" value="1"/>
</dbReference>
<evidence type="ECO:0000255" key="1">
    <source>
        <dbReference type="HAMAP-Rule" id="MF_00021"/>
    </source>
</evidence>
<protein>
    <recommendedName>
        <fullName evidence="1">Probable tRNA sulfurtransferase</fullName>
        <ecNumber evidence="1">2.8.1.4</ecNumber>
    </recommendedName>
    <alternativeName>
        <fullName evidence="1">Sulfur carrier protein ThiS sulfurtransferase</fullName>
    </alternativeName>
    <alternativeName>
        <fullName evidence="1">Thiamine biosynthesis protein ThiI</fullName>
    </alternativeName>
    <alternativeName>
        <fullName evidence="1">tRNA 4-thiouridine synthase</fullName>
    </alternativeName>
</protein>
<proteinExistence type="inferred from homology"/>
<feature type="chain" id="PRO_1000090040" description="Probable tRNA sulfurtransferase">
    <location>
        <begin position="1"/>
        <end position="404"/>
    </location>
</feature>
<feature type="domain" description="THUMP" evidence="1">
    <location>
        <begin position="60"/>
        <end position="165"/>
    </location>
</feature>
<feature type="binding site" evidence="1">
    <location>
        <begin position="183"/>
        <end position="184"/>
    </location>
    <ligand>
        <name>ATP</name>
        <dbReference type="ChEBI" id="CHEBI:30616"/>
    </ligand>
</feature>
<feature type="binding site" evidence="1">
    <location>
        <begin position="208"/>
        <end position="209"/>
    </location>
    <ligand>
        <name>ATP</name>
        <dbReference type="ChEBI" id="CHEBI:30616"/>
    </ligand>
</feature>
<feature type="binding site" evidence="1">
    <location>
        <position position="265"/>
    </location>
    <ligand>
        <name>ATP</name>
        <dbReference type="ChEBI" id="CHEBI:30616"/>
    </ligand>
</feature>
<feature type="binding site" evidence="1">
    <location>
        <position position="287"/>
    </location>
    <ligand>
        <name>ATP</name>
        <dbReference type="ChEBI" id="CHEBI:30616"/>
    </ligand>
</feature>
<feature type="binding site" evidence="1">
    <location>
        <position position="296"/>
    </location>
    <ligand>
        <name>ATP</name>
        <dbReference type="ChEBI" id="CHEBI:30616"/>
    </ligand>
</feature>
<sequence length="404" mass="44783">MDYSEIMVRHGELSTKGKNRMRFINKLKNNIQDVLAPFPAITVRSDRDRTHVSLNGTDYQPIVEALKLVFGVQALSPVYKLEKSVPLLVTAVQDIMTSLYRDGLTFKIATKRSDHAFELDSRELNSLLGGAVFEVLPNIQAQMKHPDVTLKVEIRDEAAYISYEEIKGAGGLPVGTSGKGMLMLSGGIDSPVAGYLALKRGLDIEVVHFASPPYTSPGALAKAQNLTRRLTRFGGNIQFIEVPFTEIQEEIKNKAPEAYLMTLTRRFMMRITDAIREQRKGLVIVNGESLGQVASQTLESMQAINAVTSTPIIRPVVTMDKLEIIEMAQAIDTFDISIQPFEDCCTIFAPDRPKTNPKLGNAEKYEERFDIDGLVQRAVSGIVVTEITPEIVNDEVENLIDALL</sequence>
<organism>
    <name type="scientific">Streptococcus pyogenes serotype M49 (strain NZ131)</name>
    <dbReference type="NCBI Taxonomy" id="471876"/>
    <lineage>
        <taxon>Bacteria</taxon>
        <taxon>Bacillati</taxon>
        <taxon>Bacillota</taxon>
        <taxon>Bacilli</taxon>
        <taxon>Lactobacillales</taxon>
        <taxon>Streptococcaceae</taxon>
        <taxon>Streptococcus</taxon>
    </lineage>
</organism>
<reference key="1">
    <citation type="journal article" date="2008" name="J. Bacteriol.">
        <title>Genome sequence of a nephritogenic and highly transformable M49 strain of Streptococcus pyogenes.</title>
        <authorList>
            <person name="McShan W.M."/>
            <person name="Ferretti J.J."/>
            <person name="Karasawa T."/>
            <person name="Suvorov A.N."/>
            <person name="Lin S."/>
            <person name="Qin B."/>
            <person name="Jia H."/>
            <person name="Kenton S."/>
            <person name="Najar F."/>
            <person name="Wu H."/>
            <person name="Scott J."/>
            <person name="Roe B.A."/>
            <person name="Savic D.J."/>
        </authorList>
    </citation>
    <scope>NUCLEOTIDE SEQUENCE [LARGE SCALE GENOMIC DNA]</scope>
    <source>
        <strain>NZ131</strain>
    </source>
</reference>
<gene>
    <name evidence="1" type="primary">thiI</name>
    <name type="ordered locus">Spy49_0641</name>
</gene>
<accession>B5XKV0</accession>